<sequence>MPKQEKMMLVLLILPLPYCNAAGVTTVQWGGHGDGLDRYLQRGVRDVHRPCQSVRPGRVWGKCCLTRLCSTMCCARADCTCVYHTWRGHGCSCVM</sequence>
<dbReference type="EMBL" id="KM373785">
    <property type="protein sequence ID" value="AIW67484.1"/>
    <property type="molecule type" value="mRNA"/>
</dbReference>
<dbReference type="PDB" id="4X9Z">
    <property type="method" value="X-ray"/>
    <property type="resolution" value="1.50 A"/>
    <property type="chains" value="A/B=46-95"/>
</dbReference>
<dbReference type="PDBsum" id="4X9Z"/>
<dbReference type="SMR" id="A0A0A0VBX4"/>
<dbReference type="EvolutionaryTrace" id="A0A0A0VBX4"/>
<dbReference type="GO" id="GO:0005576">
    <property type="term" value="C:extracellular region"/>
    <property type="evidence" value="ECO:0007669"/>
    <property type="project" value="UniProtKB-SubCell"/>
</dbReference>
<dbReference type="GO" id="GO:0035792">
    <property type="term" value="C:host cell postsynaptic membrane"/>
    <property type="evidence" value="ECO:0007669"/>
    <property type="project" value="UniProtKB-KW"/>
</dbReference>
<dbReference type="GO" id="GO:0030550">
    <property type="term" value="F:acetylcholine receptor inhibitor activity"/>
    <property type="evidence" value="ECO:0007669"/>
    <property type="project" value="UniProtKB-KW"/>
</dbReference>
<dbReference type="GO" id="GO:0090729">
    <property type="term" value="F:toxin activity"/>
    <property type="evidence" value="ECO:0007669"/>
    <property type="project" value="UniProtKB-KW"/>
</dbReference>
<evidence type="ECO:0000250" key="1">
    <source>
        <dbReference type="UniProtKB" id="C3VVN5"/>
    </source>
</evidence>
<evidence type="ECO:0000250" key="2">
    <source>
        <dbReference type="UniProtKB" id="P0C1W6"/>
    </source>
</evidence>
<evidence type="ECO:0000250" key="3">
    <source>
        <dbReference type="UniProtKB" id="W4VS16"/>
    </source>
</evidence>
<evidence type="ECO:0000255" key="4"/>
<evidence type="ECO:0000269" key="5">
    <source>
    </source>
</evidence>
<evidence type="ECO:0000303" key="6">
    <source>
    </source>
</evidence>
<evidence type="ECO:0000303" key="7">
    <source>
    </source>
</evidence>
<evidence type="ECO:0000305" key="8"/>
<evidence type="ECO:0000305" key="9">
    <source>
    </source>
</evidence>
<evidence type="ECO:0000305" key="10">
    <source>
    </source>
</evidence>
<evidence type="ECO:0007744" key="11">
    <source>
        <dbReference type="PDB" id="4X9Z"/>
    </source>
</evidence>
<evidence type="ECO:0007829" key="12">
    <source>
        <dbReference type="PDB" id="4X9Z"/>
    </source>
</evidence>
<protein>
    <recommendedName>
        <fullName evidence="8">Alpha-conotoxin GeXXA</fullName>
    </recommendedName>
    <alternativeName>
        <fullName evidence="6">Alpha-D-conotoxin GeXXA</fullName>
    </alternativeName>
    <alternativeName>
        <fullName evidence="7">Ge-5</fullName>
    </alternativeName>
</protein>
<name>CDKA_CONGR</name>
<organism>
    <name type="scientific">Conus generalis</name>
    <name type="common">General cone</name>
    <dbReference type="NCBI Taxonomy" id="101304"/>
    <lineage>
        <taxon>Eukaryota</taxon>
        <taxon>Metazoa</taxon>
        <taxon>Spiralia</taxon>
        <taxon>Lophotrochozoa</taxon>
        <taxon>Mollusca</taxon>
        <taxon>Gastropoda</taxon>
        <taxon>Caenogastropoda</taxon>
        <taxon>Neogastropoda</taxon>
        <taxon>Conoidea</taxon>
        <taxon>Conidae</taxon>
        <taxon>Conus</taxon>
        <taxon>Strategoconus</taxon>
    </lineage>
</organism>
<accession>A0A0A0VBX4</accession>
<reference key="1">
    <citation type="journal article" date="2015" name="Sci. Rep.">
        <title>Conotoxin alphaD-GeXXA utilizes a novel strategy to antagonize nicotinic acetylcholine receptors.</title>
        <authorList>
            <person name="Xu S."/>
            <person name="Zhang T."/>
            <person name="Kompella S.N."/>
            <person name="Yan M."/>
            <person name="Lu A."/>
            <person name="Wang Y."/>
            <person name="Shao X."/>
            <person name="Chi C."/>
            <person name="Adams D.J."/>
            <person name="Ding J."/>
            <person name="Wang C."/>
        </authorList>
    </citation>
    <scope>NUCLEOTIDE SEQUENCE [MRNA]</scope>
    <scope>PROTEIN SEQUENCE OF 46-66</scope>
    <scope>SUBCELLULAR LOCATION</scope>
    <scope>DISULFIDE BONDS</scope>
    <scope>SUBUNIT</scope>
    <scope>MUTAGENESIS OF 46-ASP--LEU-65 AND CYS-73</scope>
    <scope>X-RAY CRYSTALLOGRAPHY (1.5 ANGSTROMS) OF 46-95</scope>
    <source>
        <tissue>Venom</tissue>
        <tissue>Venom duct</tissue>
    </source>
</reference>
<reference key="2">
    <citation type="journal article" date="2019" name="Mar. Drugs">
        <title>High-throughput identification and analysis of novel conotoxins from three vermivorous cone snails by transcriptome sequencing.</title>
        <authorList>
            <person name="Yao G."/>
            <person name="Peng C."/>
            <person name="Zhu Y."/>
            <person name="Fan C."/>
            <person name="Jiang H."/>
            <person name="Chen J."/>
            <person name="Cao Y."/>
            <person name="Shi Q."/>
        </authorList>
    </citation>
    <scope>NUCLEOTIDE SEQUENCE [MRNA] OF 1-93</scope>
    <source>
        <tissue>Venom duct</tissue>
    </source>
</reference>
<keyword id="KW-0002">3D-structure</keyword>
<keyword id="KW-0008">Acetylcholine receptor inhibiting toxin</keyword>
<keyword id="KW-0903">Direct protein sequencing</keyword>
<keyword id="KW-1015">Disulfide bond</keyword>
<keyword id="KW-0528">Neurotoxin</keyword>
<keyword id="KW-0629">Postsynaptic neurotoxin</keyword>
<keyword id="KW-0964">Secreted</keyword>
<keyword id="KW-0732">Signal</keyword>
<keyword id="KW-0800">Toxin</keyword>
<comment type="function">
    <text evidence="2 5">Alpha-D-conopeptides act as non-competitive inhibitors of nicotinic acetylcholine receptors (nAChR). Through its two C-terminal domains, this homodimeric protein would bind to two nAChR allosteric sites, located outside the nAChR C-loop of the principal binding face and at the adjacent binding interface in a clockwise direction (By similarity). This toxin has strong inhibitory activity on rat alpha-9-alpha-10 (CHRNA9-CHRNA10) (IC(50)=1.2 nM) and a moderate inhibitory activity on human alpha-7 (CHRNA7) (IC(50)=210 nM), rat alpha-3-beta-2 (CHRNA3-CHRNB2) (IC(50)=498 nM), rat alpha-3-beta-4 (CHRNA3-CHRNB4) (IC(50)=614 nM) and rat alpha-1-beta-1-delta-epsilon (CHRNA1-CHRNB1-CHRNE-CHRND) (IC(50)=743 nM) subtypes (PubMed:26395518). Shows a weaker inhibitory activity on human alpha-9-alpha-10 (IC(50)=28 nM) than on the rat channel (PubMed:26395518). This is explained by a different residue in the probable binding site (His-31 in rat alpha-10 and Leu-31 in human) (PubMed:26395518).</text>
</comment>
<comment type="subunit">
    <text evidence="1 5">Homodimer (PubMed:26395518). Pseudo-homodimer (identical sequence, different post-translational modifications) (By similarity).</text>
</comment>
<comment type="subcellular location">
    <subcellularLocation>
        <location evidence="5">Secreted</location>
    </subcellularLocation>
</comment>
<comment type="tissue specificity">
    <text evidence="9">Expressed by the venom duct.</text>
</comment>
<comment type="domain">
    <text evidence="3">Displays a mini-granulin fold, a structure composed of two short, stacked beta-hairpins connected by two parallel disulfide bonds. This newly described fold is derived from the same cysteine connectivity as knottins (ICK fold). The name 'mini-granulin fold' comes from the structural homology with the N-terminal region of the human granulin.</text>
</comment>
<comment type="domain">
    <text evidence="8">The cysteine framework is XX (C-CC-C-CC-C-C-C-C).</text>
</comment>
<comment type="miscellaneous">
    <text evidence="5">Negative results: shows a very weak activity on alpha-4-beta-2 and alpha-4-beta-4 nAChR subtypes.</text>
</comment>
<comment type="miscellaneous">
    <text evidence="9 10">The Val-47 is found by direct protein sequencing in the protein described in Xu et al., 2015, and in the translated sequence in Yao et al., 2019. The Ile-47 is only found in the translated sequence described in Xu et al., 2015.</text>
</comment>
<comment type="similarity">
    <text evidence="8">Belongs to the conotoxin D superfamily.</text>
</comment>
<feature type="signal peptide" evidence="4">
    <location>
        <begin position="1"/>
        <end position="21"/>
    </location>
</feature>
<feature type="propeptide" id="PRO_0000438968" evidence="5">
    <location>
        <begin position="22"/>
        <end position="45"/>
    </location>
</feature>
<feature type="chain" id="PRO_5001970840" description="Alpha-conotoxin GeXXA" evidence="9">
    <location>
        <begin position="46"/>
        <end position="95"/>
    </location>
</feature>
<feature type="disulfide bond" description="Interchain (with C-63)" evidence="5 11">
    <location>
        <position position="51"/>
    </location>
</feature>
<feature type="disulfide bond" description="Interchain (with C-51)" evidence="5 11">
    <location>
        <position position="63"/>
    </location>
</feature>
<feature type="disulfide bond" evidence="5 11">
    <location>
        <begin position="64"/>
        <end position="73"/>
    </location>
</feature>
<feature type="disulfide bond" evidence="5 11">
    <location>
        <begin position="69"/>
        <end position="81"/>
    </location>
</feature>
<feature type="disulfide bond" evidence="5 11">
    <location>
        <begin position="74"/>
        <end position="91"/>
    </location>
</feature>
<feature type="disulfide bond" evidence="5 11">
    <location>
        <begin position="79"/>
        <end position="93"/>
    </location>
</feature>
<feature type="mutagenesis site" description="70-fold decrease in inhibition of alpha-9-alpha-10 nAChR and loss of inhibition of all other nAChR subunits; when associated with S-73 (GeXXA-CTD, monomeric form).">
    <location>
        <begin position="46"/>
        <end position="65"/>
    </location>
</feature>
<feature type="mutagenesis site" description="70-fold decrease in inhibition of alpha-9-alpha-10 nAChR and loss of inhibition of all other nAChR subunits; when associated with 46-D--L-65 (GeXXA-CTD, monomeric form).">
    <original>C</original>
    <variation>S</variation>
    <location>
        <position position="73"/>
    </location>
</feature>
<feature type="sequence conflict" description="In Ref. 2." evidence="10" ref="2">
    <original>QEKMM</original>
    <variation>LEMML</variation>
    <location>
        <begin position="4"/>
        <end position="8"/>
    </location>
</feature>
<feature type="sequence conflict" description="In Ref. 1; AIW67484." evidence="9" ref="1">
    <original>V</original>
    <variation>I</variation>
    <location>
        <position position="47"/>
    </location>
</feature>
<feature type="strand" evidence="12">
    <location>
        <begin position="59"/>
        <end position="66"/>
    </location>
</feature>
<feature type="strand" evidence="12">
    <location>
        <begin position="80"/>
        <end position="84"/>
    </location>
</feature>
<feature type="turn" evidence="12">
    <location>
        <begin position="85"/>
        <end position="87"/>
    </location>
</feature>
<feature type="strand" evidence="12">
    <location>
        <begin position="88"/>
        <end position="92"/>
    </location>
</feature>
<proteinExistence type="evidence at protein level"/>